<sequence length="216" mass="25080">MSFLFSSRSSKTFKPKKNIPEGSHQYELLKHAEATLGSGNLRQAVMLPEGEDLNEWIAVNTVDFFNQINMLYGTITEFCTEASCPVMSAGPRYEYHWADGTNIKKPIKCSAPKYIDYLMTWVQDQLDDETLFPSKIGVPFPKNFMSVAKTILKRLFRVYAHIYHQHFDSVMQLQEEAHLNTSFKHFIFFVQEFNLIDRRELAPLQELIEKLGSKDR</sequence>
<evidence type="ECO:0000250" key="1"/>
<evidence type="ECO:0000250" key="2">
    <source>
        <dbReference type="UniProtKB" id="Q9H8S9"/>
    </source>
</evidence>
<evidence type="ECO:0000305" key="3"/>
<reference key="1">
    <citation type="journal article" date="2004" name="Genome Res.">
        <title>The status, quality, and expansion of the NIH full-length cDNA project: the Mammalian Gene Collection (MGC).</title>
        <authorList>
            <consortium name="The MGC Project Team"/>
        </authorList>
    </citation>
    <scope>NUCLEOTIDE SEQUENCE [LARGE SCALE MRNA]</scope>
    <source>
        <tissue>Prostate</tissue>
    </source>
</reference>
<dbReference type="EMBL" id="BC101879">
    <property type="protein sequence ID" value="AAI01880.1"/>
    <property type="molecule type" value="mRNA"/>
</dbReference>
<dbReference type="RefSeq" id="NP_001029063.1">
    <property type="nucleotide sequence ID" value="NM_001033891.1"/>
</dbReference>
<dbReference type="SMR" id="Q3T1J9"/>
<dbReference type="FunCoup" id="Q3T1J9">
    <property type="interactions" value="3552"/>
</dbReference>
<dbReference type="IntAct" id="Q3T1J9">
    <property type="interactions" value="4"/>
</dbReference>
<dbReference type="STRING" id="10116.ENSRNOP00000072053"/>
<dbReference type="iPTMnet" id="Q3T1J9"/>
<dbReference type="PhosphoSitePlus" id="Q3T1J9"/>
<dbReference type="PaxDb" id="10116-ENSRNOP00000063824"/>
<dbReference type="GeneID" id="297387"/>
<dbReference type="KEGG" id="rno:297387"/>
<dbReference type="UCSC" id="RGD:1307014">
    <property type="organism name" value="rat"/>
</dbReference>
<dbReference type="AGR" id="RGD:1307014"/>
<dbReference type="CTD" id="55233"/>
<dbReference type="RGD" id="1307014">
    <property type="gene designation" value="Mob1a"/>
</dbReference>
<dbReference type="VEuPathDB" id="HostDB:ENSRNOG00000059474"/>
<dbReference type="eggNOG" id="KOG0440">
    <property type="taxonomic scope" value="Eukaryota"/>
</dbReference>
<dbReference type="HOGENOM" id="CLU_038321_3_1_1"/>
<dbReference type="InParanoid" id="Q3T1J9"/>
<dbReference type="OrthoDB" id="3040at9989"/>
<dbReference type="PhylomeDB" id="Q3T1J9"/>
<dbReference type="TreeFam" id="TF300789"/>
<dbReference type="Reactome" id="R-RNO-2028269">
    <property type="pathway name" value="Signaling by Hippo"/>
</dbReference>
<dbReference type="PRO" id="PR:Q3T1J9"/>
<dbReference type="Proteomes" id="UP000002494">
    <property type="component" value="Chromosome 4"/>
</dbReference>
<dbReference type="Bgee" id="ENSRNOG00000059474">
    <property type="expression patterns" value="Expressed in spleen and 19 other cell types or tissues"/>
</dbReference>
<dbReference type="GO" id="GO:0005737">
    <property type="term" value="C:cytoplasm"/>
    <property type="evidence" value="ECO:0000266"/>
    <property type="project" value="RGD"/>
</dbReference>
<dbReference type="GO" id="GO:0005634">
    <property type="term" value="C:nucleus"/>
    <property type="evidence" value="ECO:0000318"/>
    <property type="project" value="GO_Central"/>
</dbReference>
<dbReference type="GO" id="GO:0046872">
    <property type="term" value="F:metal ion binding"/>
    <property type="evidence" value="ECO:0007669"/>
    <property type="project" value="UniProtKB-KW"/>
</dbReference>
<dbReference type="GO" id="GO:0030295">
    <property type="term" value="F:protein kinase activator activity"/>
    <property type="evidence" value="ECO:0000318"/>
    <property type="project" value="GO_Central"/>
</dbReference>
<dbReference type="GO" id="GO:0043539">
    <property type="term" value="F:protein serine/threonine kinase activator activity"/>
    <property type="evidence" value="ECO:0000266"/>
    <property type="project" value="RGD"/>
</dbReference>
<dbReference type="GO" id="GO:0035329">
    <property type="term" value="P:hippo signaling"/>
    <property type="evidence" value="ECO:0000266"/>
    <property type="project" value="RGD"/>
</dbReference>
<dbReference type="FunFam" id="1.20.140.30:FF:000001">
    <property type="entry name" value="MOB kinase activator 1A"/>
    <property type="match status" value="1"/>
</dbReference>
<dbReference type="Gene3D" id="1.20.140.30">
    <property type="entry name" value="MOB kinase activator"/>
    <property type="match status" value="1"/>
</dbReference>
<dbReference type="InterPro" id="IPR005301">
    <property type="entry name" value="MOB_kinase_act_fam"/>
</dbReference>
<dbReference type="InterPro" id="IPR036703">
    <property type="entry name" value="MOB_kinase_act_sf"/>
</dbReference>
<dbReference type="PANTHER" id="PTHR22599">
    <property type="entry name" value="MPS ONE BINDER KINASE ACTIVATOR-LIKE MOB"/>
    <property type="match status" value="1"/>
</dbReference>
<dbReference type="Pfam" id="PF03637">
    <property type="entry name" value="Mob1_phocein"/>
    <property type="match status" value="1"/>
</dbReference>
<dbReference type="SMART" id="SM01388">
    <property type="entry name" value="Mob1_phocein"/>
    <property type="match status" value="1"/>
</dbReference>
<dbReference type="SUPFAM" id="SSF101152">
    <property type="entry name" value="Mob1/phocein"/>
    <property type="match status" value="1"/>
</dbReference>
<proteinExistence type="evidence at transcript level"/>
<protein>
    <recommendedName>
        <fullName>MOB kinase activator 1A</fullName>
    </recommendedName>
    <alternativeName>
        <fullName>Mob1 homolog 1B</fullName>
    </alternativeName>
    <alternativeName>
        <fullName>Mps one binder kinase activator-like 1B</fullName>
    </alternativeName>
</protein>
<keyword id="KW-0007">Acetylation</keyword>
<keyword id="KW-0479">Metal-binding</keyword>
<keyword id="KW-0597">Phosphoprotein</keyword>
<keyword id="KW-1185">Reference proteome</keyword>
<keyword id="KW-0862">Zinc</keyword>
<gene>
    <name type="primary">Mob1a</name>
    <name type="synonym">Mobk1b</name>
    <name type="synonym">Mobkl1b</name>
</gene>
<organism>
    <name type="scientific">Rattus norvegicus</name>
    <name type="common">Rat</name>
    <dbReference type="NCBI Taxonomy" id="10116"/>
    <lineage>
        <taxon>Eukaryota</taxon>
        <taxon>Metazoa</taxon>
        <taxon>Chordata</taxon>
        <taxon>Craniata</taxon>
        <taxon>Vertebrata</taxon>
        <taxon>Euteleostomi</taxon>
        <taxon>Mammalia</taxon>
        <taxon>Eutheria</taxon>
        <taxon>Euarchontoglires</taxon>
        <taxon>Glires</taxon>
        <taxon>Rodentia</taxon>
        <taxon>Myomorpha</taxon>
        <taxon>Muroidea</taxon>
        <taxon>Muridae</taxon>
        <taxon>Murinae</taxon>
        <taxon>Rattus</taxon>
    </lineage>
</organism>
<feature type="initiator methionine" description="Removed" evidence="2">
    <location>
        <position position="1"/>
    </location>
</feature>
<feature type="chain" id="PRO_0000247605" description="MOB kinase activator 1A">
    <location>
        <begin position="2"/>
        <end position="216"/>
    </location>
</feature>
<feature type="binding site" evidence="1">
    <location>
        <position position="79"/>
    </location>
    <ligand>
        <name>Zn(2+)</name>
        <dbReference type="ChEBI" id="CHEBI:29105"/>
    </ligand>
</feature>
<feature type="binding site" evidence="1">
    <location>
        <position position="84"/>
    </location>
    <ligand>
        <name>Zn(2+)</name>
        <dbReference type="ChEBI" id="CHEBI:29105"/>
    </ligand>
</feature>
<feature type="binding site" evidence="1">
    <location>
        <position position="161"/>
    </location>
    <ligand>
        <name>Zn(2+)</name>
        <dbReference type="ChEBI" id="CHEBI:29105"/>
    </ligand>
</feature>
<feature type="binding site" evidence="1">
    <location>
        <position position="166"/>
    </location>
    <ligand>
        <name>Zn(2+)</name>
        <dbReference type="ChEBI" id="CHEBI:29105"/>
    </ligand>
</feature>
<feature type="modified residue" description="N-acetylserine" evidence="2">
    <location>
        <position position="2"/>
    </location>
</feature>
<feature type="modified residue" description="Phosphothreonine" evidence="2">
    <location>
        <position position="12"/>
    </location>
</feature>
<feature type="modified residue" description="Phosphothreonine" evidence="2">
    <location>
        <position position="35"/>
    </location>
</feature>
<feature type="modified residue" description="Phosphothreonine; by STK3/MST2" evidence="2">
    <location>
        <position position="74"/>
    </location>
</feature>
<feature type="modified residue" description="Phosphothreonine" evidence="2">
    <location>
        <position position="181"/>
    </location>
</feature>
<name>MOB1A_RAT</name>
<comment type="function">
    <text evidence="1">Activator of LATS1/2 in the Hippo signaling pathway which plays a pivotal role in organ size control and tumor suppression by restricting proliferation and promoting apoptosis. The core of this pathway is composed of a kinase cascade wherein STK3/MST2 and STK4/MST1, in complex with its regulatory protein SAV1, phosphorylates and activates LATS1/2 in complex with its regulatory protein MOB1, which in turn phosphorylates and inactivates YAP1 oncoprotein and WWTR1/TAZ. Phosphorylation of YAP1 by LATS1/2 inhibits its translocation into the nucleus to regulate cellular genes important for cell proliferation, cell death, and cell migration. Stimulates the kinase activity of STK38 and STK38L. Acts cooperatively with STK3/MST2 to activate STK38 (By similarity).</text>
</comment>
<comment type="subunit">
    <text evidence="1">Binds STK38 and STK38L. Interacts with LATS1 and LATS2 (By similarity). Forms a tripartite complex with STK38 and STK3/MST2 (By similarity).</text>
</comment>
<comment type="PTM">
    <text evidence="1">Phosphorylated by STK3/MST2 and STK4/MST1 and this phosphorylation enhances its binding to LATS1.</text>
</comment>
<comment type="similarity">
    <text evidence="3">Belongs to the MOB1/phocein family.</text>
</comment>
<accession>Q3T1J9</accession>